<comment type="function">
    <text evidence="1">Catalyzes the conversion of S-adenosyl-L-methionine (SAM) to carboxy-S-adenosyl-L-methionine (Cx-SAM).</text>
</comment>
<comment type="catalytic activity">
    <reaction evidence="1">
        <text>prephenate + S-adenosyl-L-methionine = carboxy-S-adenosyl-L-methionine + 3-phenylpyruvate + H2O</text>
        <dbReference type="Rhea" id="RHEA:51692"/>
        <dbReference type="ChEBI" id="CHEBI:15377"/>
        <dbReference type="ChEBI" id="CHEBI:18005"/>
        <dbReference type="ChEBI" id="CHEBI:29934"/>
        <dbReference type="ChEBI" id="CHEBI:59789"/>
        <dbReference type="ChEBI" id="CHEBI:134278"/>
    </reaction>
</comment>
<comment type="subunit">
    <text evidence="1">Homodimer.</text>
</comment>
<comment type="similarity">
    <text evidence="1">Belongs to the class I-like SAM-binding methyltransferase superfamily. Cx-SAM synthase family.</text>
</comment>
<comment type="sequence caution" evidence="2">
    <conflict type="erroneous initiation">
        <sequence resource="EMBL-CDS" id="CAG75410"/>
    </conflict>
</comment>
<dbReference type="EC" id="2.1.3.-" evidence="1"/>
<dbReference type="EMBL" id="BX950851">
    <property type="protein sequence ID" value="CAG75410.1"/>
    <property type="status" value="ALT_INIT"/>
    <property type="molecule type" value="Genomic_DNA"/>
</dbReference>
<dbReference type="RefSeq" id="WP_039291507.1">
    <property type="nucleotide sequence ID" value="NC_004547.2"/>
</dbReference>
<dbReference type="SMR" id="Q6D483"/>
<dbReference type="STRING" id="218491.ECA2511"/>
<dbReference type="GeneID" id="57208790"/>
<dbReference type="KEGG" id="eca:ECA2511"/>
<dbReference type="PATRIC" id="fig|218491.5.peg.2541"/>
<dbReference type="eggNOG" id="COG2226">
    <property type="taxonomic scope" value="Bacteria"/>
</dbReference>
<dbReference type="HOGENOM" id="CLU_078475_0_0_6"/>
<dbReference type="OrthoDB" id="9779941at2"/>
<dbReference type="Proteomes" id="UP000007966">
    <property type="component" value="Chromosome"/>
</dbReference>
<dbReference type="GO" id="GO:0016743">
    <property type="term" value="F:carboxyl- or carbamoyltransferase activity"/>
    <property type="evidence" value="ECO:0007669"/>
    <property type="project" value="UniProtKB-UniRule"/>
</dbReference>
<dbReference type="GO" id="GO:1904047">
    <property type="term" value="F:S-adenosyl-L-methionine binding"/>
    <property type="evidence" value="ECO:0007669"/>
    <property type="project" value="UniProtKB-UniRule"/>
</dbReference>
<dbReference type="GO" id="GO:0002098">
    <property type="term" value="P:tRNA wobble uridine modification"/>
    <property type="evidence" value="ECO:0007669"/>
    <property type="project" value="InterPro"/>
</dbReference>
<dbReference type="CDD" id="cd02440">
    <property type="entry name" value="AdoMet_MTases"/>
    <property type="match status" value="1"/>
</dbReference>
<dbReference type="Gene3D" id="3.40.50.150">
    <property type="entry name" value="Vaccinia Virus protein VP39"/>
    <property type="match status" value="1"/>
</dbReference>
<dbReference type="HAMAP" id="MF_01589">
    <property type="entry name" value="Cx_SAM_synthase"/>
    <property type="match status" value="1"/>
</dbReference>
<dbReference type="InterPro" id="IPR005271">
    <property type="entry name" value="CmoA"/>
</dbReference>
<dbReference type="InterPro" id="IPR041698">
    <property type="entry name" value="Methyltransf_25"/>
</dbReference>
<dbReference type="InterPro" id="IPR029063">
    <property type="entry name" value="SAM-dependent_MTases_sf"/>
</dbReference>
<dbReference type="NCBIfam" id="TIGR00740">
    <property type="entry name" value="carboxy-S-adenosyl-L-methionine synthase CmoA"/>
    <property type="match status" value="1"/>
</dbReference>
<dbReference type="NCBIfam" id="NF011995">
    <property type="entry name" value="PRK15451.1"/>
    <property type="match status" value="1"/>
</dbReference>
<dbReference type="PANTHER" id="PTHR43861:SF2">
    <property type="entry name" value="CARBOXY-S-ADENOSYL-L-METHIONINE SYNTHASE"/>
    <property type="match status" value="1"/>
</dbReference>
<dbReference type="PANTHER" id="PTHR43861">
    <property type="entry name" value="TRANS-ACONITATE 2-METHYLTRANSFERASE-RELATED"/>
    <property type="match status" value="1"/>
</dbReference>
<dbReference type="Pfam" id="PF13649">
    <property type="entry name" value="Methyltransf_25"/>
    <property type="match status" value="1"/>
</dbReference>
<dbReference type="PIRSF" id="PIRSF006325">
    <property type="entry name" value="MeTrfase_bac"/>
    <property type="match status" value="1"/>
</dbReference>
<dbReference type="SUPFAM" id="SSF53335">
    <property type="entry name" value="S-adenosyl-L-methionine-dependent methyltransferases"/>
    <property type="match status" value="1"/>
</dbReference>
<accession>Q6D483</accession>
<organism>
    <name type="scientific">Pectobacterium atrosepticum (strain SCRI 1043 / ATCC BAA-672)</name>
    <name type="common">Erwinia carotovora subsp. atroseptica</name>
    <dbReference type="NCBI Taxonomy" id="218491"/>
    <lineage>
        <taxon>Bacteria</taxon>
        <taxon>Pseudomonadati</taxon>
        <taxon>Pseudomonadota</taxon>
        <taxon>Gammaproteobacteria</taxon>
        <taxon>Enterobacterales</taxon>
        <taxon>Pectobacteriaceae</taxon>
        <taxon>Pectobacterium</taxon>
    </lineage>
</organism>
<reference key="1">
    <citation type="journal article" date="2004" name="Proc. Natl. Acad. Sci. U.S.A.">
        <title>Genome sequence of the enterobacterial phytopathogen Erwinia carotovora subsp. atroseptica and characterization of virulence factors.</title>
        <authorList>
            <person name="Bell K.S."/>
            <person name="Sebaihia M."/>
            <person name="Pritchard L."/>
            <person name="Holden M.T.G."/>
            <person name="Hyman L.J."/>
            <person name="Holeva M.C."/>
            <person name="Thomson N.R."/>
            <person name="Bentley S.D."/>
            <person name="Churcher L.J.C."/>
            <person name="Mungall K."/>
            <person name="Atkin R."/>
            <person name="Bason N."/>
            <person name="Brooks K."/>
            <person name="Chillingworth T."/>
            <person name="Clark K."/>
            <person name="Doggett J."/>
            <person name="Fraser A."/>
            <person name="Hance Z."/>
            <person name="Hauser H."/>
            <person name="Jagels K."/>
            <person name="Moule S."/>
            <person name="Norbertczak H."/>
            <person name="Ormond D."/>
            <person name="Price C."/>
            <person name="Quail M.A."/>
            <person name="Sanders M."/>
            <person name="Walker D."/>
            <person name="Whitehead S."/>
            <person name="Salmond G.P.C."/>
            <person name="Birch P.R.J."/>
            <person name="Parkhill J."/>
            <person name="Toth I.K."/>
        </authorList>
    </citation>
    <scope>NUCLEOTIDE SEQUENCE [LARGE SCALE GENOMIC DNA]</scope>
    <source>
        <strain>SCRI 1043 / ATCC BAA-672</strain>
    </source>
</reference>
<sequence>MPNRDMLFSVPIANLGDWTFDERVADVFPDMIQRSVPGYSNIISMIGMLAERFARSNSLVYDLGCSLGAATLSMRRNIHVPDCKIIAVDNSPAMVKRCRGHIDAFRSETPVEVIEADILNIDIKNASMVVLNFTLQFLEPSQRQVLIERIYQGLNPGGVLVLSEKFNFADKDVGELLFNMHLDFKRANGYSELEISQKRSMLENVMLTDSVETHKARLADAGFEHSEIWFQCFNFGSLLAVKAEEKA</sequence>
<feature type="chain" id="PRO_0000314325" description="Carboxy-S-adenosyl-L-methionine synthase">
    <location>
        <begin position="1"/>
        <end position="247"/>
    </location>
</feature>
<feature type="binding site" evidence="1">
    <location>
        <position position="39"/>
    </location>
    <ligand>
        <name>S-adenosyl-L-methionine</name>
        <dbReference type="ChEBI" id="CHEBI:59789"/>
    </ligand>
</feature>
<feature type="binding site" evidence="1">
    <location>
        <begin position="64"/>
        <end position="66"/>
    </location>
    <ligand>
        <name>S-adenosyl-L-methionine</name>
        <dbReference type="ChEBI" id="CHEBI:59789"/>
    </ligand>
</feature>
<feature type="binding site" evidence="1">
    <location>
        <begin position="89"/>
        <end position="90"/>
    </location>
    <ligand>
        <name>S-adenosyl-L-methionine</name>
        <dbReference type="ChEBI" id="CHEBI:59789"/>
    </ligand>
</feature>
<feature type="binding site" evidence="1">
    <location>
        <begin position="117"/>
        <end position="118"/>
    </location>
    <ligand>
        <name>S-adenosyl-L-methionine</name>
        <dbReference type="ChEBI" id="CHEBI:59789"/>
    </ligand>
</feature>
<feature type="binding site" evidence="1">
    <location>
        <position position="132"/>
    </location>
    <ligand>
        <name>S-adenosyl-L-methionine</name>
        <dbReference type="ChEBI" id="CHEBI:59789"/>
    </ligand>
</feature>
<feature type="binding site" evidence="1">
    <location>
        <position position="199"/>
    </location>
    <ligand>
        <name>S-adenosyl-L-methionine</name>
        <dbReference type="ChEBI" id="CHEBI:59789"/>
    </ligand>
</feature>
<protein>
    <recommendedName>
        <fullName evidence="1">Carboxy-S-adenosyl-L-methionine synthase</fullName>
        <shortName evidence="1">Cx-SAM synthase</shortName>
        <ecNumber evidence="1">2.1.3.-</ecNumber>
    </recommendedName>
</protein>
<evidence type="ECO:0000255" key="1">
    <source>
        <dbReference type="HAMAP-Rule" id="MF_01589"/>
    </source>
</evidence>
<evidence type="ECO:0000305" key="2"/>
<keyword id="KW-1185">Reference proteome</keyword>
<keyword id="KW-0949">S-adenosyl-L-methionine</keyword>
<keyword id="KW-0808">Transferase</keyword>
<gene>
    <name evidence="1" type="primary">cmoA</name>
    <name type="ordered locus">ECA2511</name>
</gene>
<name>CMOA_PECAS</name>
<proteinExistence type="inferred from homology"/>